<comment type="function">
    <text evidence="1">Receptor for both mineralocorticoids (MC) such as cortisol. Binds to mineralocorticoid response elements (MRE) and transactivates target genes. The effect of MC is to increase ion and water transport and thus raise extracellular fluid volume and blood pressure and lower potassium levels (By similarity).</text>
</comment>
<comment type="subcellular location">
    <subcellularLocation>
        <location evidence="1">Cytoplasm</location>
    </subcellularLocation>
    <subcellularLocation>
        <location evidence="3">Nucleus</location>
    </subcellularLocation>
    <text evidence="1">Cytoplasmic and nuclear in the absence of ligand, nuclear after ligand-binding.</text>
</comment>
<comment type="domain">
    <text>Composed of three domains: a modulating N-terminal domain, a DNA-binding domain and a C-terminal ligand-binding domain.</text>
</comment>
<comment type="similarity">
    <text evidence="6">Belongs to the nuclear hormone receptor family. NR3 subfamily.</text>
</comment>
<feature type="chain" id="PRO_0000053689" description="Mineralocorticoid receptor">
    <location>
        <begin position="1" status="less than"/>
        <end position="359"/>
    </location>
</feature>
<feature type="domain" description="NR LBD" evidence="4">
    <location>
        <begin position="108"/>
        <end position="339"/>
    </location>
</feature>
<feature type="DNA-binding region" description="Nuclear receptor" evidence="3">
    <location>
        <begin position="1" status="less than"/>
        <end position="49"/>
    </location>
</feature>
<feature type="zinc finger region" description="NR C4-type" evidence="3">
    <location>
        <begin position="13"/>
        <end position="37"/>
    </location>
</feature>
<feature type="region of interest" description="Disordered" evidence="5">
    <location>
        <begin position="48"/>
        <end position="96"/>
    </location>
</feature>
<feature type="region of interest" description="Hinge">
    <location>
        <begin position="50"/>
        <end position="107"/>
    </location>
</feature>
<feature type="region of interest" description="Important for coactivator binding" evidence="1">
    <location>
        <begin position="157"/>
        <end position="160"/>
    </location>
</feature>
<feature type="binding site" evidence="2">
    <location>
        <position position="13"/>
    </location>
    <ligand>
        <name>Zn(2+)</name>
        <dbReference type="ChEBI" id="CHEBI:29105"/>
        <label>2</label>
    </ligand>
</feature>
<feature type="binding site" evidence="2">
    <location>
        <position position="19"/>
    </location>
    <ligand>
        <name>Zn(2+)</name>
        <dbReference type="ChEBI" id="CHEBI:29105"/>
        <label>2</label>
    </ligand>
</feature>
<feature type="binding site" evidence="2">
    <location>
        <position position="29"/>
    </location>
    <ligand>
        <name>Zn(2+)</name>
        <dbReference type="ChEBI" id="CHEBI:29105"/>
        <label>2</label>
    </ligand>
</feature>
<feature type="binding site" evidence="2">
    <location>
        <position position="32"/>
    </location>
    <ligand>
        <name>Zn(2+)</name>
        <dbReference type="ChEBI" id="CHEBI:29105"/>
        <label>2</label>
    </ligand>
</feature>
<feature type="binding site" evidence="2">
    <location>
        <position position="145"/>
    </location>
    <ligand>
        <name>21-hydroxyprogesterone</name>
        <dbReference type="ChEBI" id="CHEBI:16973"/>
    </ligand>
</feature>
<feature type="binding site" evidence="2">
    <location>
        <position position="145"/>
    </location>
    <ligand>
        <name>aldosterone</name>
        <dbReference type="ChEBI" id="CHEBI:27584"/>
    </ligand>
</feature>
<feature type="binding site" evidence="2">
    <location>
        <position position="145"/>
    </location>
    <ligand>
        <name>progesterone</name>
        <dbReference type="ChEBI" id="CHEBI:17026"/>
    </ligand>
</feature>
<feature type="binding site" evidence="2">
    <location>
        <position position="151"/>
    </location>
    <ligand>
        <name>21-hydroxyprogesterone</name>
        <dbReference type="ChEBI" id="CHEBI:16973"/>
    </ligand>
</feature>
<feature type="binding site" evidence="2">
    <location>
        <position position="151"/>
    </location>
    <ligand>
        <name>aldosterone</name>
        <dbReference type="ChEBI" id="CHEBI:27584"/>
    </ligand>
</feature>
<feature type="binding site" evidence="2">
    <location>
        <position position="151"/>
    </location>
    <ligand>
        <name>progesterone</name>
        <dbReference type="ChEBI" id="CHEBI:17026"/>
    </ligand>
</feature>
<feature type="binding site" evidence="2">
    <location>
        <position position="192"/>
    </location>
    <ligand>
        <name>21-hydroxyprogesterone</name>
        <dbReference type="ChEBI" id="CHEBI:16973"/>
    </ligand>
</feature>
<feature type="binding site" evidence="2">
    <location>
        <position position="192"/>
    </location>
    <ligand>
        <name>aldosterone</name>
        <dbReference type="ChEBI" id="CHEBI:27584"/>
    </ligand>
</feature>
<feature type="binding site" evidence="2">
    <location>
        <position position="192"/>
    </location>
    <ligand>
        <name>progesterone</name>
        <dbReference type="ChEBI" id="CHEBI:17026"/>
    </ligand>
</feature>
<feature type="binding site" evidence="2">
    <location>
        <position position="320"/>
    </location>
    <ligand>
        <name>21-hydroxyprogesterone</name>
        <dbReference type="ChEBI" id="CHEBI:16973"/>
    </ligand>
</feature>
<feature type="binding site" evidence="2">
    <location>
        <position position="320"/>
    </location>
    <ligand>
        <name>aldosterone</name>
        <dbReference type="ChEBI" id="CHEBI:27584"/>
    </ligand>
</feature>
<feature type="binding site" evidence="2">
    <location>
        <position position="320"/>
    </location>
    <ligand>
        <name>progesterone</name>
        <dbReference type="ChEBI" id="CHEBI:17026"/>
    </ligand>
</feature>
<feature type="non-terminal residue">
    <location>
        <position position="1"/>
    </location>
</feature>
<gene>
    <name type="primary">nr3c2</name>
    <name type="synonym">mlr</name>
</gene>
<reference key="1">
    <citation type="journal article" date="2000" name="Steroids">
        <title>A mineralocorticoid-like receptor in the rainbow trout, Oncorhynchus mykiss: cloning and characterization of its steroid binding domain.</title>
        <authorList>
            <person name="Colombe L."/>
            <person name="Fostier A."/>
            <person name="Bury N."/>
            <person name="Pakdel F."/>
            <person name="Guiguen Y."/>
        </authorList>
    </citation>
    <scope>NUCLEOTIDE SEQUENCE [MRNA]</scope>
    <source>
        <tissue>Testis</tissue>
    </source>
</reference>
<protein>
    <recommendedName>
        <fullName>Mineralocorticoid receptor</fullName>
        <shortName>MR</shortName>
    </recommendedName>
    <alternativeName>
        <fullName>Nuclear receptor subfamily 3 group C member 2</fullName>
    </alternativeName>
</protein>
<organism>
    <name type="scientific">Oncorhynchus mykiss</name>
    <name type="common">Rainbow trout</name>
    <name type="synonym">Salmo gairdneri</name>
    <dbReference type="NCBI Taxonomy" id="8022"/>
    <lineage>
        <taxon>Eukaryota</taxon>
        <taxon>Metazoa</taxon>
        <taxon>Chordata</taxon>
        <taxon>Craniata</taxon>
        <taxon>Vertebrata</taxon>
        <taxon>Euteleostomi</taxon>
        <taxon>Actinopterygii</taxon>
        <taxon>Neopterygii</taxon>
        <taxon>Teleostei</taxon>
        <taxon>Protacanthopterygii</taxon>
        <taxon>Salmoniformes</taxon>
        <taxon>Salmonidae</taxon>
        <taxon>Salmoninae</taxon>
        <taxon>Oncorhynchus</taxon>
    </lineage>
</organism>
<dbReference type="EMBL" id="AF209873">
    <property type="protein sequence ID" value="AAF61206.1"/>
    <property type="molecule type" value="mRNA"/>
</dbReference>
<dbReference type="SMR" id="Q9IAC6"/>
<dbReference type="SABIO-RK" id="Q9IAC6"/>
<dbReference type="Proteomes" id="UP000694395">
    <property type="component" value="Unplaced"/>
</dbReference>
<dbReference type="GO" id="GO:0045177">
    <property type="term" value="C:apical part of cell"/>
    <property type="evidence" value="ECO:0000314"/>
    <property type="project" value="AgBase"/>
</dbReference>
<dbReference type="GO" id="GO:1990794">
    <property type="term" value="C:basolateral part of cell"/>
    <property type="evidence" value="ECO:0000314"/>
    <property type="project" value="AgBase"/>
</dbReference>
<dbReference type="GO" id="GO:0005737">
    <property type="term" value="C:cytoplasm"/>
    <property type="evidence" value="ECO:0000314"/>
    <property type="project" value="AgBase"/>
</dbReference>
<dbReference type="GO" id="GO:0005829">
    <property type="term" value="C:cytosol"/>
    <property type="evidence" value="ECO:0000315"/>
    <property type="project" value="AgBase"/>
</dbReference>
<dbReference type="GO" id="GO:0016020">
    <property type="term" value="C:membrane"/>
    <property type="evidence" value="ECO:0000315"/>
    <property type="project" value="AgBase"/>
</dbReference>
<dbReference type="GO" id="GO:0005634">
    <property type="term" value="C:nucleus"/>
    <property type="evidence" value="ECO:0000314"/>
    <property type="project" value="AgBase"/>
</dbReference>
<dbReference type="GO" id="GO:1903878">
    <property type="term" value="F:11-deoxycorticosterone binding"/>
    <property type="evidence" value="ECO:0000315"/>
    <property type="project" value="AgBase"/>
</dbReference>
<dbReference type="GO" id="GO:1903876">
    <property type="term" value="F:11-deoxycortisol binding"/>
    <property type="evidence" value="ECO:0000315"/>
    <property type="project" value="AgBase"/>
</dbReference>
<dbReference type="GO" id="GO:1903879">
    <property type="term" value="F:11beta-hydroxyprogesterone binding"/>
    <property type="evidence" value="ECO:0000315"/>
    <property type="project" value="AgBase"/>
</dbReference>
<dbReference type="GO" id="GO:1903880">
    <property type="term" value="F:17alpha-hydroxyprogesterone binding"/>
    <property type="evidence" value="ECO:0000315"/>
    <property type="project" value="AgBase"/>
</dbReference>
<dbReference type="GO" id="GO:1903877">
    <property type="term" value="F:21-deoxycortisol binding"/>
    <property type="evidence" value="ECO:0000315"/>
    <property type="project" value="AgBase"/>
</dbReference>
<dbReference type="GO" id="GO:0001046">
    <property type="term" value="F:core promoter sequence-specific DNA binding"/>
    <property type="evidence" value="ECO:0000314"/>
    <property type="project" value="AgBase"/>
</dbReference>
<dbReference type="GO" id="GO:1903875">
    <property type="term" value="F:corticosterone binding"/>
    <property type="evidence" value="ECO:0000315"/>
    <property type="project" value="AgBase"/>
</dbReference>
<dbReference type="GO" id="GO:1903794">
    <property type="term" value="F:cortisol binding"/>
    <property type="evidence" value="ECO:0000315"/>
    <property type="project" value="AgBase"/>
</dbReference>
<dbReference type="GO" id="GO:0098531">
    <property type="term" value="F:ligand-modulated transcription factor activity"/>
    <property type="evidence" value="ECO:0000314"/>
    <property type="project" value="AgBase"/>
</dbReference>
<dbReference type="GO" id="GO:0031963">
    <property type="term" value="F:nuclear cortisol receptor activity"/>
    <property type="evidence" value="ECO:0000314"/>
    <property type="project" value="AgBase"/>
</dbReference>
<dbReference type="GO" id="GO:0008270">
    <property type="term" value="F:zinc ion binding"/>
    <property type="evidence" value="ECO:0007669"/>
    <property type="project" value="UniProtKB-KW"/>
</dbReference>
<dbReference type="GO" id="GO:0043433">
    <property type="term" value="P:negative regulation of DNA-binding transcription factor activity"/>
    <property type="evidence" value="ECO:0000314"/>
    <property type="project" value="AgBase"/>
</dbReference>
<dbReference type="GO" id="GO:0010628">
    <property type="term" value="P:positive regulation of gene expression"/>
    <property type="evidence" value="ECO:0000314"/>
    <property type="project" value="AgBase"/>
</dbReference>
<dbReference type="GO" id="GO:1903496">
    <property type="term" value="P:response to 11-deoxycorticosterone"/>
    <property type="evidence" value="ECO:0000314"/>
    <property type="project" value="AgBase"/>
</dbReference>
<dbReference type="GO" id="GO:0051414">
    <property type="term" value="P:response to cortisol"/>
    <property type="evidence" value="ECO:0000314"/>
    <property type="project" value="AgBase"/>
</dbReference>
<dbReference type="CDD" id="cd07075">
    <property type="entry name" value="NR_LBD_MR"/>
    <property type="match status" value="1"/>
</dbReference>
<dbReference type="FunFam" id="1.10.565.10:FF:000004">
    <property type="entry name" value="Androgen receptor variant"/>
    <property type="match status" value="1"/>
</dbReference>
<dbReference type="FunFam" id="3.30.50.10:FF:000087">
    <property type="entry name" value="Mineralocorticoid receptor"/>
    <property type="match status" value="1"/>
</dbReference>
<dbReference type="Gene3D" id="3.30.50.10">
    <property type="entry name" value="Erythroid Transcription Factor GATA-1, subunit A"/>
    <property type="match status" value="1"/>
</dbReference>
<dbReference type="Gene3D" id="1.10.565.10">
    <property type="entry name" value="Retinoid X Receptor"/>
    <property type="match status" value="1"/>
</dbReference>
<dbReference type="InterPro" id="IPR035500">
    <property type="entry name" value="NHR-like_dom_sf"/>
</dbReference>
<dbReference type="InterPro" id="IPR000536">
    <property type="entry name" value="Nucl_hrmn_rcpt_lig-bd"/>
</dbReference>
<dbReference type="InterPro" id="IPR050200">
    <property type="entry name" value="Nuclear_hormone_rcpt_NR3"/>
</dbReference>
<dbReference type="InterPro" id="IPR001723">
    <property type="entry name" value="Nuclear_hrmn_rcpt"/>
</dbReference>
<dbReference type="InterPro" id="IPR001628">
    <property type="entry name" value="Znf_hrmn_rcpt"/>
</dbReference>
<dbReference type="InterPro" id="IPR013088">
    <property type="entry name" value="Znf_NHR/GATA"/>
</dbReference>
<dbReference type="PANTHER" id="PTHR48092">
    <property type="entry name" value="KNIRPS-RELATED PROTEIN-RELATED"/>
    <property type="match status" value="1"/>
</dbReference>
<dbReference type="Pfam" id="PF00104">
    <property type="entry name" value="Hormone_recep"/>
    <property type="match status" value="1"/>
</dbReference>
<dbReference type="Pfam" id="PF00105">
    <property type="entry name" value="zf-C4"/>
    <property type="match status" value="1"/>
</dbReference>
<dbReference type="PRINTS" id="PR00398">
    <property type="entry name" value="STRDHORMONER"/>
</dbReference>
<dbReference type="SMART" id="SM00430">
    <property type="entry name" value="HOLI"/>
    <property type="match status" value="1"/>
</dbReference>
<dbReference type="SMART" id="SM00399">
    <property type="entry name" value="ZnF_C4"/>
    <property type="match status" value="1"/>
</dbReference>
<dbReference type="SUPFAM" id="SSF57716">
    <property type="entry name" value="Glucocorticoid receptor-like (DNA-binding domain)"/>
    <property type="match status" value="1"/>
</dbReference>
<dbReference type="SUPFAM" id="SSF48508">
    <property type="entry name" value="Nuclear receptor ligand-binding domain"/>
    <property type="match status" value="1"/>
</dbReference>
<dbReference type="PROSITE" id="PS51843">
    <property type="entry name" value="NR_LBD"/>
    <property type="match status" value="1"/>
</dbReference>
<dbReference type="PROSITE" id="PS51030">
    <property type="entry name" value="NUCLEAR_REC_DBD_2"/>
    <property type="match status" value="1"/>
</dbReference>
<evidence type="ECO:0000250" key="1"/>
<evidence type="ECO:0000250" key="2">
    <source>
        <dbReference type="UniProtKB" id="P08235"/>
    </source>
</evidence>
<evidence type="ECO:0000255" key="3">
    <source>
        <dbReference type="PROSITE-ProRule" id="PRU00407"/>
    </source>
</evidence>
<evidence type="ECO:0000255" key="4">
    <source>
        <dbReference type="PROSITE-ProRule" id="PRU01189"/>
    </source>
</evidence>
<evidence type="ECO:0000256" key="5">
    <source>
        <dbReference type="SAM" id="MobiDB-lite"/>
    </source>
</evidence>
<evidence type="ECO:0000305" key="6"/>
<sequence>FKRAVEGQHNYLCAGRNDCIIDKIRRKNCPACRVRKCLQAGMNLGARKSKKPGKLKGVNEDSTPTKEGGQTCPGSGGGYLSSGEKELSTSPTNALVPHGPGGGLVTPYLPPSICSVLELIEPEVVFAGYDNTQPDTTDHLLSSLNQLAGKQMIRVVKWAKVLPGFRGLPIEDQITLIQYSWMCLSSFSLSWRSYKHTNGQMLYFAPDLVFNEDRMQQSAMYDLCLGMRQVSQEFVRLQLTYQEFLSMKVLLLLSTVPKEGLKNQAAFEEMRVNYIKELRRSVGKAPTTLDRRGNRSSQLTKLLDAMHDLGGELLDFCFYTFRESQALKVEFPEMLVEIISDQIPKVESGNTHTLYFHKK</sequence>
<keyword id="KW-0963">Cytoplasm</keyword>
<keyword id="KW-0238">DNA-binding</keyword>
<keyword id="KW-0446">Lipid-binding</keyword>
<keyword id="KW-0479">Metal-binding</keyword>
<keyword id="KW-0539">Nucleus</keyword>
<keyword id="KW-0675">Receptor</keyword>
<keyword id="KW-0754">Steroid-binding</keyword>
<keyword id="KW-0804">Transcription</keyword>
<keyword id="KW-0805">Transcription regulation</keyword>
<keyword id="KW-0862">Zinc</keyword>
<keyword id="KW-0863">Zinc-finger</keyword>
<accession>Q9IAC6</accession>
<name>MCR_ONCMY</name>
<proteinExistence type="evidence at transcript level"/>